<gene>
    <name evidence="1" type="primary">rlmH</name>
    <name type="ordered locus">Pput_4683</name>
</gene>
<sequence>MRLRLIAVGSRMPKWVEEGWHEYAKRLPAELSLELVEIPLNTRGKNADVARLIRQEGEAMLSKVQPGERIVTLEVHGKPWSTEQLATELDRWRLDARTVNLMVGGPEGLAPEVCARAEQRWSLSPLTLPHPLVRILIGEQIYRAWTVLSGHPYHK</sequence>
<dbReference type="EC" id="2.1.1.177" evidence="1"/>
<dbReference type="EMBL" id="CP000712">
    <property type="protein sequence ID" value="ABQ80803.1"/>
    <property type="molecule type" value="Genomic_DNA"/>
</dbReference>
<dbReference type="SMR" id="A5W9J3"/>
<dbReference type="KEGG" id="ppf:Pput_4683"/>
<dbReference type="eggNOG" id="COG1576">
    <property type="taxonomic scope" value="Bacteria"/>
</dbReference>
<dbReference type="HOGENOM" id="CLU_100552_1_0_6"/>
<dbReference type="GO" id="GO:0005737">
    <property type="term" value="C:cytoplasm"/>
    <property type="evidence" value="ECO:0007669"/>
    <property type="project" value="UniProtKB-SubCell"/>
</dbReference>
<dbReference type="GO" id="GO:0070038">
    <property type="term" value="F:rRNA (pseudouridine-N3-)-methyltransferase activity"/>
    <property type="evidence" value="ECO:0007669"/>
    <property type="project" value="UniProtKB-UniRule"/>
</dbReference>
<dbReference type="CDD" id="cd18081">
    <property type="entry name" value="RlmH-like"/>
    <property type="match status" value="1"/>
</dbReference>
<dbReference type="Gene3D" id="3.40.1280.10">
    <property type="match status" value="1"/>
</dbReference>
<dbReference type="HAMAP" id="MF_00658">
    <property type="entry name" value="23SrRNA_methyltr_H"/>
    <property type="match status" value="1"/>
</dbReference>
<dbReference type="InterPro" id="IPR029028">
    <property type="entry name" value="Alpha/beta_knot_MTases"/>
</dbReference>
<dbReference type="InterPro" id="IPR003742">
    <property type="entry name" value="RlmH-like"/>
</dbReference>
<dbReference type="InterPro" id="IPR029026">
    <property type="entry name" value="tRNA_m1G_MTases_N"/>
</dbReference>
<dbReference type="NCBIfam" id="NF000986">
    <property type="entry name" value="PRK00103.1-4"/>
    <property type="match status" value="1"/>
</dbReference>
<dbReference type="NCBIfam" id="TIGR00246">
    <property type="entry name" value="tRNA_RlmH_YbeA"/>
    <property type="match status" value="1"/>
</dbReference>
<dbReference type="PANTHER" id="PTHR33603">
    <property type="entry name" value="METHYLTRANSFERASE"/>
    <property type="match status" value="1"/>
</dbReference>
<dbReference type="PANTHER" id="PTHR33603:SF1">
    <property type="entry name" value="RIBOSOMAL RNA LARGE SUBUNIT METHYLTRANSFERASE H"/>
    <property type="match status" value="1"/>
</dbReference>
<dbReference type="Pfam" id="PF02590">
    <property type="entry name" value="SPOUT_MTase"/>
    <property type="match status" value="1"/>
</dbReference>
<dbReference type="PIRSF" id="PIRSF004505">
    <property type="entry name" value="MT_bac"/>
    <property type="match status" value="1"/>
</dbReference>
<dbReference type="SUPFAM" id="SSF75217">
    <property type="entry name" value="alpha/beta knot"/>
    <property type="match status" value="1"/>
</dbReference>
<feature type="chain" id="PRO_1000061828" description="Ribosomal RNA large subunit methyltransferase H">
    <location>
        <begin position="1"/>
        <end position="155"/>
    </location>
</feature>
<feature type="binding site" evidence="1">
    <location>
        <position position="73"/>
    </location>
    <ligand>
        <name>S-adenosyl-L-methionine</name>
        <dbReference type="ChEBI" id="CHEBI:59789"/>
    </ligand>
</feature>
<feature type="binding site" evidence="1">
    <location>
        <position position="104"/>
    </location>
    <ligand>
        <name>S-adenosyl-L-methionine</name>
        <dbReference type="ChEBI" id="CHEBI:59789"/>
    </ligand>
</feature>
<feature type="binding site" evidence="1">
    <location>
        <begin position="123"/>
        <end position="128"/>
    </location>
    <ligand>
        <name>S-adenosyl-L-methionine</name>
        <dbReference type="ChEBI" id="CHEBI:59789"/>
    </ligand>
</feature>
<organism>
    <name type="scientific">Pseudomonas putida (strain ATCC 700007 / DSM 6899 / JCM 31910 / BCRC 17059 / LMG 24140 / F1)</name>
    <dbReference type="NCBI Taxonomy" id="351746"/>
    <lineage>
        <taxon>Bacteria</taxon>
        <taxon>Pseudomonadati</taxon>
        <taxon>Pseudomonadota</taxon>
        <taxon>Gammaproteobacteria</taxon>
        <taxon>Pseudomonadales</taxon>
        <taxon>Pseudomonadaceae</taxon>
        <taxon>Pseudomonas</taxon>
    </lineage>
</organism>
<name>RLMH_PSEP1</name>
<accession>A5W9J3</accession>
<keyword id="KW-0963">Cytoplasm</keyword>
<keyword id="KW-0489">Methyltransferase</keyword>
<keyword id="KW-0698">rRNA processing</keyword>
<keyword id="KW-0949">S-adenosyl-L-methionine</keyword>
<keyword id="KW-0808">Transferase</keyword>
<protein>
    <recommendedName>
        <fullName evidence="1">Ribosomal RNA large subunit methyltransferase H</fullName>
        <ecNumber evidence="1">2.1.1.177</ecNumber>
    </recommendedName>
    <alternativeName>
        <fullName evidence="1">23S rRNA (pseudouridine1915-N3)-methyltransferase</fullName>
    </alternativeName>
    <alternativeName>
        <fullName evidence="1">23S rRNA m3Psi1915 methyltransferase</fullName>
    </alternativeName>
    <alternativeName>
        <fullName evidence="1">rRNA (pseudouridine-N3-)-methyltransferase RlmH</fullName>
    </alternativeName>
</protein>
<reference key="1">
    <citation type="submission" date="2007-05" db="EMBL/GenBank/DDBJ databases">
        <title>Complete sequence of Pseudomonas putida F1.</title>
        <authorList>
            <consortium name="US DOE Joint Genome Institute"/>
            <person name="Copeland A."/>
            <person name="Lucas S."/>
            <person name="Lapidus A."/>
            <person name="Barry K."/>
            <person name="Detter J.C."/>
            <person name="Glavina del Rio T."/>
            <person name="Hammon N."/>
            <person name="Israni S."/>
            <person name="Dalin E."/>
            <person name="Tice H."/>
            <person name="Pitluck S."/>
            <person name="Chain P."/>
            <person name="Malfatti S."/>
            <person name="Shin M."/>
            <person name="Vergez L."/>
            <person name="Schmutz J."/>
            <person name="Larimer F."/>
            <person name="Land M."/>
            <person name="Hauser L."/>
            <person name="Kyrpides N."/>
            <person name="Lykidis A."/>
            <person name="Parales R."/>
            <person name="Richardson P."/>
        </authorList>
    </citation>
    <scope>NUCLEOTIDE SEQUENCE [LARGE SCALE GENOMIC DNA]</scope>
    <source>
        <strain>ATCC 700007 / DSM 6899 / JCM 31910 / BCRC 17059 / LMG 24140 / F1</strain>
    </source>
</reference>
<evidence type="ECO:0000255" key="1">
    <source>
        <dbReference type="HAMAP-Rule" id="MF_00658"/>
    </source>
</evidence>
<comment type="function">
    <text evidence="1">Specifically methylates the pseudouridine at position 1915 (m3Psi1915) in 23S rRNA.</text>
</comment>
<comment type="catalytic activity">
    <reaction evidence="1">
        <text>pseudouridine(1915) in 23S rRNA + S-adenosyl-L-methionine = N(3)-methylpseudouridine(1915) in 23S rRNA + S-adenosyl-L-homocysteine + H(+)</text>
        <dbReference type="Rhea" id="RHEA:42752"/>
        <dbReference type="Rhea" id="RHEA-COMP:10221"/>
        <dbReference type="Rhea" id="RHEA-COMP:10222"/>
        <dbReference type="ChEBI" id="CHEBI:15378"/>
        <dbReference type="ChEBI" id="CHEBI:57856"/>
        <dbReference type="ChEBI" id="CHEBI:59789"/>
        <dbReference type="ChEBI" id="CHEBI:65314"/>
        <dbReference type="ChEBI" id="CHEBI:74486"/>
        <dbReference type="EC" id="2.1.1.177"/>
    </reaction>
</comment>
<comment type="subunit">
    <text evidence="1">Homodimer.</text>
</comment>
<comment type="subcellular location">
    <subcellularLocation>
        <location evidence="1">Cytoplasm</location>
    </subcellularLocation>
</comment>
<comment type="similarity">
    <text evidence="1">Belongs to the RNA methyltransferase RlmH family.</text>
</comment>
<proteinExistence type="inferred from homology"/>